<reference key="1">
    <citation type="submission" date="2006-03" db="EMBL/GenBank/DDBJ databases">
        <title>Complete sequence of Shewanella denitrificans OS217.</title>
        <authorList>
            <consortium name="US DOE Joint Genome Institute"/>
            <person name="Copeland A."/>
            <person name="Lucas S."/>
            <person name="Lapidus A."/>
            <person name="Barry K."/>
            <person name="Detter J.C."/>
            <person name="Glavina del Rio T."/>
            <person name="Hammon N."/>
            <person name="Israni S."/>
            <person name="Dalin E."/>
            <person name="Tice H."/>
            <person name="Pitluck S."/>
            <person name="Brettin T."/>
            <person name="Bruce D."/>
            <person name="Han C."/>
            <person name="Tapia R."/>
            <person name="Gilna P."/>
            <person name="Kiss H."/>
            <person name="Schmutz J."/>
            <person name="Larimer F."/>
            <person name="Land M."/>
            <person name="Hauser L."/>
            <person name="Kyrpides N."/>
            <person name="Lykidis A."/>
            <person name="Richardson P."/>
        </authorList>
    </citation>
    <scope>NUCLEOTIDE SEQUENCE [LARGE SCALE GENOMIC DNA]</scope>
    <source>
        <strain>OS217 / ATCC BAA-1090 / DSM 15013</strain>
    </source>
</reference>
<accession>Q12L31</accession>
<proteinExistence type="inferred from homology"/>
<organism>
    <name type="scientific">Shewanella denitrificans (strain OS217 / ATCC BAA-1090 / DSM 15013)</name>
    <dbReference type="NCBI Taxonomy" id="318161"/>
    <lineage>
        <taxon>Bacteria</taxon>
        <taxon>Pseudomonadati</taxon>
        <taxon>Pseudomonadota</taxon>
        <taxon>Gammaproteobacteria</taxon>
        <taxon>Alteromonadales</taxon>
        <taxon>Shewanellaceae</taxon>
        <taxon>Shewanella</taxon>
    </lineage>
</organism>
<dbReference type="EC" id="2.8.1.4" evidence="1"/>
<dbReference type="EMBL" id="CP000302">
    <property type="protein sequence ID" value="ABE55845.1"/>
    <property type="molecule type" value="Genomic_DNA"/>
</dbReference>
<dbReference type="RefSeq" id="WP_011496996.1">
    <property type="nucleotide sequence ID" value="NC_007954.1"/>
</dbReference>
<dbReference type="SMR" id="Q12L31"/>
<dbReference type="STRING" id="318161.Sden_2566"/>
<dbReference type="KEGG" id="sdn:Sden_2566"/>
<dbReference type="eggNOG" id="COG0301">
    <property type="taxonomic scope" value="Bacteria"/>
</dbReference>
<dbReference type="eggNOG" id="COG0607">
    <property type="taxonomic scope" value="Bacteria"/>
</dbReference>
<dbReference type="HOGENOM" id="CLU_037952_4_1_6"/>
<dbReference type="OrthoDB" id="9773948at2"/>
<dbReference type="UniPathway" id="UPA00060"/>
<dbReference type="Proteomes" id="UP000001982">
    <property type="component" value="Chromosome"/>
</dbReference>
<dbReference type="GO" id="GO:0005829">
    <property type="term" value="C:cytosol"/>
    <property type="evidence" value="ECO:0007669"/>
    <property type="project" value="TreeGrafter"/>
</dbReference>
<dbReference type="GO" id="GO:0005524">
    <property type="term" value="F:ATP binding"/>
    <property type="evidence" value="ECO:0007669"/>
    <property type="project" value="UniProtKB-UniRule"/>
</dbReference>
<dbReference type="GO" id="GO:0004810">
    <property type="term" value="F:CCA tRNA nucleotidyltransferase activity"/>
    <property type="evidence" value="ECO:0007669"/>
    <property type="project" value="InterPro"/>
</dbReference>
<dbReference type="GO" id="GO:0000049">
    <property type="term" value="F:tRNA binding"/>
    <property type="evidence" value="ECO:0007669"/>
    <property type="project" value="UniProtKB-UniRule"/>
</dbReference>
<dbReference type="GO" id="GO:0140741">
    <property type="term" value="F:tRNA-uracil-4 sulfurtransferase activity"/>
    <property type="evidence" value="ECO:0007669"/>
    <property type="project" value="UniProtKB-EC"/>
</dbReference>
<dbReference type="GO" id="GO:0009228">
    <property type="term" value="P:thiamine biosynthetic process"/>
    <property type="evidence" value="ECO:0007669"/>
    <property type="project" value="UniProtKB-KW"/>
</dbReference>
<dbReference type="GO" id="GO:0009229">
    <property type="term" value="P:thiamine diphosphate biosynthetic process"/>
    <property type="evidence" value="ECO:0007669"/>
    <property type="project" value="UniProtKB-UniRule"/>
</dbReference>
<dbReference type="GO" id="GO:0052837">
    <property type="term" value="P:thiazole biosynthetic process"/>
    <property type="evidence" value="ECO:0007669"/>
    <property type="project" value="InterPro"/>
</dbReference>
<dbReference type="GO" id="GO:0002937">
    <property type="term" value="P:tRNA 4-thiouridine biosynthesis"/>
    <property type="evidence" value="ECO:0007669"/>
    <property type="project" value="TreeGrafter"/>
</dbReference>
<dbReference type="CDD" id="cd01712">
    <property type="entry name" value="PPase_ThiI"/>
    <property type="match status" value="1"/>
</dbReference>
<dbReference type="CDD" id="cd00158">
    <property type="entry name" value="RHOD"/>
    <property type="match status" value="1"/>
</dbReference>
<dbReference type="CDD" id="cd11716">
    <property type="entry name" value="THUMP_ThiI"/>
    <property type="match status" value="1"/>
</dbReference>
<dbReference type="FunFam" id="3.40.50.620:FF:000029">
    <property type="entry name" value="tRNA sulfurtransferase"/>
    <property type="match status" value="1"/>
</dbReference>
<dbReference type="Gene3D" id="3.30.2130.30">
    <property type="match status" value="1"/>
</dbReference>
<dbReference type="Gene3D" id="3.40.50.620">
    <property type="entry name" value="HUPs"/>
    <property type="match status" value="1"/>
</dbReference>
<dbReference type="Gene3D" id="3.40.250.10">
    <property type="entry name" value="Rhodanese-like domain"/>
    <property type="match status" value="1"/>
</dbReference>
<dbReference type="HAMAP" id="MF_00021">
    <property type="entry name" value="ThiI"/>
    <property type="match status" value="1"/>
</dbReference>
<dbReference type="InterPro" id="IPR001763">
    <property type="entry name" value="Rhodanese-like_dom"/>
</dbReference>
<dbReference type="InterPro" id="IPR036873">
    <property type="entry name" value="Rhodanese-like_dom_sf"/>
</dbReference>
<dbReference type="InterPro" id="IPR014729">
    <property type="entry name" value="Rossmann-like_a/b/a_fold"/>
</dbReference>
<dbReference type="InterPro" id="IPR020536">
    <property type="entry name" value="ThiI_AANH"/>
</dbReference>
<dbReference type="InterPro" id="IPR054173">
    <property type="entry name" value="ThiI_fer"/>
</dbReference>
<dbReference type="InterPro" id="IPR049961">
    <property type="entry name" value="ThiI_N"/>
</dbReference>
<dbReference type="InterPro" id="IPR026340">
    <property type="entry name" value="THII_Thiazole_biosynth_dom"/>
</dbReference>
<dbReference type="InterPro" id="IPR004114">
    <property type="entry name" value="THUMP_dom"/>
</dbReference>
<dbReference type="InterPro" id="IPR049962">
    <property type="entry name" value="THUMP_ThiI"/>
</dbReference>
<dbReference type="InterPro" id="IPR003720">
    <property type="entry name" value="tRNA_STrfase"/>
</dbReference>
<dbReference type="InterPro" id="IPR050102">
    <property type="entry name" value="tRNA_sulfurtransferase_ThiI"/>
</dbReference>
<dbReference type="NCBIfam" id="TIGR04271">
    <property type="entry name" value="ThiI_C_thiazole"/>
    <property type="match status" value="1"/>
</dbReference>
<dbReference type="NCBIfam" id="TIGR00342">
    <property type="entry name" value="tRNA uracil 4-sulfurtransferase ThiI"/>
    <property type="match status" value="1"/>
</dbReference>
<dbReference type="PANTHER" id="PTHR43209">
    <property type="entry name" value="TRNA SULFURTRANSFERASE"/>
    <property type="match status" value="1"/>
</dbReference>
<dbReference type="PANTHER" id="PTHR43209:SF1">
    <property type="entry name" value="TRNA SULFURTRANSFERASE"/>
    <property type="match status" value="1"/>
</dbReference>
<dbReference type="Pfam" id="PF00581">
    <property type="entry name" value="Rhodanese"/>
    <property type="match status" value="1"/>
</dbReference>
<dbReference type="Pfam" id="PF02568">
    <property type="entry name" value="ThiI"/>
    <property type="match status" value="1"/>
</dbReference>
<dbReference type="Pfam" id="PF22025">
    <property type="entry name" value="ThiI_fer"/>
    <property type="match status" value="1"/>
</dbReference>
<dbReference type="Pfam" id="PF02926">
    <property type="entry name" value="THUMP"/>
    <property type="match status" value="1"/>
</dbReference>
<dbReference type="SMART" id="SM00981">
    <property type="entry name" value="THUMP"/>
    <property type="match status" value="1"/>
</dbReference>
<dbReference type="SUPFAM" id="SSF52402">
    <property type="entry name" value="Adenine nucleotide alpha hydrolases-like"/>
    <property type="match status" value="1"/>
</dbReference>
<dbReference type="SUPFAM" id="SSF52821">
    <property type="entry name" value="Rhodanese/Cell cycle control phosphatase"/>
    <property type="match status" value="1"/>
</dbReference>
<dbReference type="SUPFAM" id="SSF143437">
    <property type="entry name" value="THUMP domain-like"/>
    <property type="match status" value="1"/>
</dbReference>
<dbReference type="PROSITE" id="PS50206">
    <property type="entry name" value="RHODANESE_3"/>
    <property type="match status" value="1"/>
</dbReference>
<dbReference type="PROSITE" id="PS51165">
    <property type="entry name" value="THUMP"/>
    <property type="match status" value="1"/>
</dbReference>
<keyword id="KW-0067">ATP-binding</keyword>
<keyword id="KW-0963">Cytoplasm</keyword>
<keyword id="KW-1015">Disulfide bond</keyword>
<keyword id="KW-0547">Nucleotide-binding</keyword>
<keyword id="KW-0676">Redox-active center</keyword>
<keyword id="KW-1185">Reference proteome</keyword>
<keyword id="KW-0694">RNA-binding</keyword>
<keyword id="KW-0784">Thiamine biosynthesis</keyword>
<keyword id="KW-0808">Transferase</keyword>
<keyword id="KW-0820">tRNA-binding</keyword>
<name>THII_SHEDO</name>
<gene>
    <name evidence="1" type="primary">thiI</name>
    <name type="ordered locus">Sden_2566</name>
</gene>
<evidence type="ECO:0000255" key="1">
    <source>
        <dbReference type="HAMAP-Rule" id="MF_00021"/>
    </source>
</evidence>
<feature type="chain" id="PRO_1000074266" description="tRNA sulfurtransferase">
    <location>
        <begin position="1"/>
        <end position="486"/>
    </location>
</feature>
<feature type="domain" description="THUMP" evidence="1">
    <location>
        <begin position="63"/>
        <end position="167"/>
    </location>
</feature>
<feature type="domain" description="Rhodanese" evidence="1">
    <location>
        <begin position="408"/>
        <end position="486"/>
    </location>
</feature>
<feature type="active site" description="Cysteine persulfide intermediate" evidence="1">
    <location>
        <position position="460"/>
    </location>
</feature>
<feature type="binding site" evidence="1">
    <location>
        <begin position="185"/>
        <end position="186"/>
    </location>
    <ligand>
        <name>ATP</name>
        <dbReference type="ChEBI" id="CHEBI:30616"/>
    </ligand>
</feature>
<feature type="binding site" evidence="1">
    <location>
        <position position="267"/>
    </location>
    <ligand>
        <name>ATP</name>
        <dbReference type="ChEBI" id="CHEBI:30616"/>
    </ligand>
</feature>
<feature type="binding site" evidence="1">
    <location>
        <position position="289"/>
    </location>
    <ligand>
        <name>ATP</name>
        <dbReference type="ChEBI" id="CHEBI:30616"/>
    </ligand>
</feature>
<feature type="binding site" evidence="1">
    <location>
        <position position="298"/>
    </location>
    <ligand>
        <name>ATP</name>
        <dbReference type="ChEBI" id="CHEBI:30616"/>
    </ligand>
</feature>
<feature type="disulfide bond" description="Redox-active" evidence="1">
    <location>
        <begin position="346"/>
        <end position="460"/>
    </location>
</feature>
<protein>
    <recommendedName>
        <fullName evidence="1">tRNA sulfurtransferase</fullName>
        <ecNumber evidence="1">2.8.1.4</ecNumber>
    </recommendedName>
    <alternativeName>
        <fullName evidence="1">Sulfur carrier protein ThiS sulfurtransferase</fullName>
    </alternativeName>
    <alternativeName>
        <fullName evidence="1">Thiamine biosynthesis protein ThiI</fullName>
    </alternativeName>
    <alternativeName>
        <fullName evidence="1">tRNA 4-thiouridine synthase</fullName>
    </alternativeName>
</protein>
<comment type="function">
    <text evidence="1">Catalyzes the ATP-dependent transfer of a sulfur to tRNA to produce 4-thiouridine in position 8 of tRNAs, which functions as a near-UV photosensor. Also catalyzes the transfer of sulfur to the sulfur carrier protein ThiS, forming ThiS-thiocarboxylate. This is a step in the synthesis of thiazole, in the thiamine biosynthesis pathway. The sulfur is donated as persulfide by IscS.</text>
</comment>
<comment type="catalytic activity">
    <reaction evidence="1">
        <text>[ThiI sulfur-carrier protein]-S-sulfanyl-L-cysteine + a uridine in tRNA + 2 reduced [2Fe-2S]-[ferredoxin] + ATP + H(+) = [ThiI sulfur-carrier protein]-L-cysteine + a 4-thiouridine in tRNA + 2 oxidized [2Fe-2S]-[ferredoxin] + AMP + diphosphate</text>
        <dbReference type="Rhea" id="RHEA:24176"/>
        <dbReference type="Rhea" id="RHEA-COMP:10000"/>
        <dbReference type="Rhea" id="RHEA-COMP:10001"/>
        <dbReference type="Rhea" id="RHEA-COMP:13337"/>
        <dbReference type="Rhea" id="RHEA-COMP:13338"/>
        <dbReference type="Rhea" id="RHEA-COMP:13339"/>
        <dbReference type="Rhea" id="RHEA-COMP:13340"/>
        <dbReference type="ChEBI" id="CHEBI:15378"/>
        <dbReference type="ChEBI" id="CHEBI:29950"/>
        <dbReference type="ChEBI" id="CHEBI:30616"/>
        <dbReference type="ChEBI" id="CHEBI:33019"/>
        <dbReference type="ChEBI" id="CHEBI:33737"/>
        <dbReference type="ChEBI" id="CHEBI:33738"/>
        <dbReference type="ChEBI" id="CHEBI:61963"/>
        <dbReference type="ChEBI" id="CHEBI:65315"/>
        <dbReference type="ChEBI" id="CHEBI:136798"/>
        <dbReference type="ChEBI" id="CHEBI:456215"/>
        <dbReference type="EC" id="2.8.1.4"/>
    </reaction>
</comment>
<comment type="catalytic activity">
    <reaction evidence="1">
        <text>[ThiS sulfur-carrier protein]-C-terminal Gly-Gly-AMP + S-sulfanyl-L-cysteinyl-[cysteine desulfurase] + AH2 = [ThiS sulfur-carrier protein]-C-terminal-Gly-aminoethanethioate + L-cysteinyl-[cysteine desulfurase] + A + AMP + 2 H(+)</text>
        <dbReference type="Rhea" id="RHEA:43340"/>
        <dbReference type="Rhea" id="RHEA-COMP:12157"/>
        <dbReference type="Rhea" id="RHEA-COMP:12158"/>
        <dbReference type="Rhea" id="RHEA-COMP:12910"/>
        <dbReference type="Rhea" id="RHEA-COMP:19908"/>
        <dbReference type="ChEBI" id="CHEBI:13193"/>
        <dbReference type="ChEBI" id="CHEBI:15378"/>
        <dbReference type="ChEBI" id="CHEBI:17499"/>
        <dbReference type="ChEBI" id="CHEBI:29950"/>
        <dbReference type="ChEBI" id="CHEBI:61963"/>
        <dbReference type="ChEBI" id="CHEBI:90618"/>
        <dbReference type="ChEBI" id="CHEBI:232372"/>
        <dbReference type="ChEBI" id="CHEBI:456215"/>
    </reaction>
</comment>
<comment type="pathway">
    <text evidence="1">Cofactor biosynthesis; thiamine diphosphate biosynthesis.</text>
</comment>
<comment type="subcellular location">
    <subcellularLocation>
        <location evidence="1">Cytoplasm</location>
    </subcellularLocation>
</comment>
<comment type="similarity">
    <text evidence="1">Belongs to the ThiI family.</text>
</comment>
<sequence length="486" mass="54861">MKFIVKLYPEIMMKSKSVRSRFTKMLETNIRNVLKKVDEDAKVQRQWDRIMVRVPADRPELVDAFAERLGCIPGIAHVVQVNEYTFDSVDHIYQQVLPLYREQLAGKTFCVRVKRTGQHDFKSIEVERYVGGGLNQHTDAVGVKLKNPDLTINLEIDHEKLYMVVRRIEGLGGFPMATQEDVLSLISGGFDSGVSSFQFIKKGARTHYCFFNLGGSQHEIGVKQVAYHLWKTYGESHKVKFISVPFEGVVQEILERIDNGQMGVILKRVMMRAATLLADKYGIQALVTGESLGQVSSQTLTNLNVIDRCTDLLILRPLIAMDKQDIINQSRIIGTEDFAKSIPEYCGVISQKPTVKAVLSKIEAEELKFSENLIENIVAQAKVIDIKDIAIEMDNQIAAAEAETVVAVDTQEVVIDIRAQEEEEKNPLSLPGKTVMTIPFFKLSTQFADLDKSVTYLLYCERGVMSKLQALYLIEQGYTNVKVYRP</sequence>